<reference key="1">
    <citation type="journal article" date="2021" name="Appl. Environ. Microbiol.">
        <title>Ice-Binding Proteins Associated with an Antarctic Cyanobacterium, Nostoc sp. HG1.</title>
        <authorList>
            <person name="Raymond J.A."/>
            <person name="Janech M.G."/>
            <person name="Mangiagalli M."/>
        </authorList>
    </citation>
    <scope>NUCLEOTIDE SEQUENCE [GENOMIC DNA]</scope>
    <scope>FUNCTION</scope>
    <scope>SUBCELLULAR LOCATION</scope>
    <scope>DOMAIN</scope>
    <scope>MUTAGENESIS OF 239-VAL--TRP-269</scope>
</reference>
<organism>
    <name type="scientific">Nostoc sp. (strain HG1)</name>
    <dbReference type="NCBI Taxonomy" id="2593659"/>
    <lineage>
        <taxon>Bacteria</taxon>
        <taxon>Bacillati</taxon>
        <taxon>Cyanobacteriota</taxon>
        <taxon>Cyanophyceae</taxon>
        <taxon>Nostocales</taxon>
        <taxon>Nostocaceae</taxon>
        <taxon>Nostoc</taxon>
    </lineage>
</organism>
<dbReference type="EMBL" id="MN082380">
    <property type="protein sequence ID" value="QLF98912.1"/>
    <property type="molecule type" value="Genomic_DNA"/>
</dbReference>
<dbReference type="SMR" id="A0A7D5JNZ7"/>
<dbReference type="GO" id="GO:0009279">
    <property type="term" value="C:cell outer membrane"/>
    <property type="evidence" value="ECO:0007669"/>
    <property type="project" value="UniProtKB-SubCell"/>
</dbReference>
<dbReference type="InterPro" id="IPR021884">
    <property type="entry name" value="Ice-bd_prot"/>
</dbReference>
<dbReference type="Pfam" id="PF11999">
    <property type="entry name" value="Ice_binding"/>
    <property type="match status" value="1"/>
</dbReference>
<sequence length="269" mass="27596">MLKINRKYAIILAIVAFSSFQTEAKAASISMLGTASNFGVLGGSTVTNTGPSVITESLGVSTGSSATGFPPAIVNGTIFTSDTVAAQAQVDNATAYNKLASLIPNKDLTGLDLGGLTLTPGVYSFSSSAQLTGILTLDNLGDPNALFVFQIGSTLTTASNSSIVTTNGDAPNVFFQIGSSATLGTGTQFMGNILALTSITLTTGVNIDCGRALAQNGAVTMDTNKVSNACYTKPQEKAVVPEPDSSLAVLGSGLVSLLFAFRKRFRKGW</sequence>
<evidence type="ECO:0000255" key="1"/>
<evidence type="ECO:0000269" key="2">
    <source>
    </source>
</evidence>
<evidence type="ECO:0000303" key="3">
    <source>
    </source>
</evidence>
<evidence type="ECO:0000305" key="4"/>
<evidence type="ECO:0000305" key="5">
    <source>
    </source>
</evidence>
<proteinExistence type="evidence at protein level"/>
<accession>A0A7D5JNZ7</accession>
<name>IBP_NOSSH</name>
<comment type="function">
    <text evidence="5">A probable ice-binding protein that has ice-structuring activities in vitro. Thought not to anchor the cyanobacterium to ice surfaces, as its habitat is shallow puddles fed by glacier meltwater.</text>
</comment>
<comment type="subcellular location">
    <subcellularLocation>
        <location evidence="5">Cell outer membrane</location>
        <topology evidence="1">Single-pass membrane protein</topology>
    </subcellularLocation>
    <text evidence="5">An ice-binding activity is found in the supernatant and on the surface of clumps of these cells. Only about 80% of the cells are this strain of Nostoc, so other proteins may be contributing to ice binding. Probably anchored to the outer membrane by its PEP C-terminal signal.</text>
</comment>
<comment type="domain">
    <text evidence="5">The ice-binding site may be formed by 7 T/S-X-T motifs.</text>
</comment>
<comment type="similarity">
    <text evidence="4">Belongs to the ice-binding protein family.</text>
</comment>
<protein>
    <recommendedName>
        <fullName evidence="3">Ice-binding protein</fullName>
        <shortName evidence="3">nIBP</shortName>
    </recommendedName>
</protein>
<keyword id="KW-0998">Cell outer membrane</keyword>
<keyword id="KW-0472">Membrane</keyword>
<keyword id="KW-0732">Signal</keyword>
<keyword id="KW-0812">Transmembrane</keyword>
<keyword id="KW-1133">Transmembrane helix</keyword>
<feature type="signal peptide" evidence="1">
    <location>
        <begin position="1"/>
        <end position="24"/>
    </location>
</feature>
<feature type="chain" id="PRO_5027728693" description="Ice-binding protein" evidence="1">
    <location>
        <begin position="25"/>
        <end position="269"/>
    </location>
</feature>
<feature type="transmembrane region" description="Helical" evidence="1">
    <location>
        <begin position="245"/>
        <end position="261"/>
    </location>
</feature>
<feature type="region of interest" description="PEP C-terminal anchor" evidence="5">
    <location>
        <begin position="240"/>
        <end position="263"/>
    </location>
</feature>
<feature type="short sequence motif" description="Probable ice-binding motif (T/S-X-T) 1" evidence="5">
    <location>
        <begin position="45"/>
        <end position="47"/>
    </location>
</feature>
<feature type="short sequence motif" description="Probable ice-binding motif (T/S-X-T) 2" evidence="5">
    <location>
        <begin position="65"/>
        <end position="67"/>
    </location>
</feature>
<feature type="short sequence motif" description="Probable ice-binding motif (T/S-X-T) 3" evidence="5">
    <location>
        <begin position="128"/>
        <end position="130"/>
    </location>
</feature>
<feature type="short sequence motif" description="Probable ice-binding motif (T/S-X-T) 4" evidence="5">
    <location>
        <begin position="154"/>
        <end position="156"/>
    </location>
</feature>
<feature type="short sequence motif" description="Probable ice-binding motif (T/S-X-T) 5" evidence="5">
    <location>
        <begin position="180"/>
        <end position="182"/>
    </location>
</feature>
<feature type="short sequence motif" description="Probable ice-binding motif (T/S-X-T) 6" evidence="5">
    <location>
        <begin position="198"/>
        <end position="200"/>
    </location>
</feature>
<feature type="short sequence motif" description="Probable ice-binding motif (T/S-X-T) 7" evidence="5">
    <location>
        <begin position="218"/>
        <end position="220"/>
    </location>
</feature>
<feature type="mutagenesis site" description="Protein still structures ice in vitro." evidence="2">
    <location>
        <begin position="239"/>
        <end position="269"/>
    </location>
</feature>